<name>SYD_LACAC</name>
<proteinExistence type="inferred from homology"/>
<keyword id="KW-0030">Aminoacyl-tRNA synthetase</keyword>
<keyword id="KW-0067">ATP-binding</keyword>
<keyword id="KW-0963">Cytoplasm</keyword>
<keyword id="KW-0436">Ligase</keyword>
<keyword id="KW-0547">Nucleotide-binding</keyword>
<keyword id="KW-0648">Protein biosynthesis</keyword>
<keyword id="KW-1185">Reference proteome</keyword>
<gene>
    <name evidence="1" type="primary">aspS</name>
    <name type="ordered locus">LBA0936</name>
</gene>
<sequence>MEKRTDYCGNITEKYIGQDVNLYGWVQRVRNLGNLVFIDLRDREGLVQIVVNKDSGKDLMEIANSLGNEYVIQVRGKVVKRSEANPDMKTGQVEVDATEIIILNEAKNPPFEIKDGVEISEQTRLKYRYLDLRRPEVQKAIILRSKILRATHEFFDENGFIDIETPILGKSSPEGARDYLVPSRIYPGSFYALPQSPQLFKQLLMGAGFDKYYQLARCFRDEDLRGDRQPEFTQIDMEMSFADEQTIQDYTEGLLKKIMKDVMGIDLKTPIKRMSWTDSMNKYGCDKPDTRYGMLIHDLSSIFKDSDFKVFSGAIADGGFVKGIAVKNGAKEYSRKKIDKKADFIKRFHAKGLAWVKFEDGEFSGPVARFLTDENKEALKKEFDLEGGELVVFVADKWKVVCDSLDHLRREFAKETGIIPKGVYDFVWVVDWPLFEYDEGLGRWVAAHHPFTMPDDEGVKLLTTDPHKAHARSYDIVMNGDEMGGGSIRIHKRSIQEDMFKALGFTKKRAYEQFGYLMDAFDMGFPPHAGLAIGLDRFAMMLAGKDNIRDVLAFPKNASASEPMMHAPAPVADQQLADLGIEVEKQYEDSVKATEERLEKMAAEDAEENSTWDK</sequence>
<feature type="chain" id="PRO_0000235531" description="Aspartate--tRNA ligase">
    <location>
        <begin position="1"/>
        <end position="614"/>
    </location>
</feature>
<feature type="region of interest" description="Aspartate" evidence="1">
    <location>
        <begin position="198"/>
        <end position="201"/>
    </location>
</feature>
<feature type="binding site" evidence="1">
    <location>
        <position position="174"/>
    </location>
    <ligand>
        <name>L-aspartate</name>
        <dbReference type="ChEBI" id="CHEBI:29991"/>
    </ligand>
</feature>
<feature type="binding site" evidence="1">
    <location>
        <begin position="220"/>
        <end position="222"/>
    </location>
    <ligand>
        <name>ATP</name>
        <dbReference type="ChEBI" id="CHEBI:30616"/>
    </ligand>
</feature>
<feature type="binding site" evidence="1">
    <location>
        <position position="220"/>
    </location>
    <ligand>
        <name>L-aspartate</name>
        <dbReference type="ChEBI" id="CHEBI:29991"/>
    </ligand>
</feature>
<feature type="binding site" evidence="1">
    <location>
        <position position="229"/>
    </location>
    <ligand>
        <name>ATP</name>
        <dbReference type="ChEBI" id="CHEBI:30616"/>
    </ligand>
</feature>
<feature type="binding site" evidence="1">
    <location>
        <position position="448"/>
    </location>
    <ligand>
        <name>L-aspartate</name>
        <dbReference type="ChEBI" id="CHEBI:29991"/>
    </ligand>
</feature>
<feature type="binding site" evidence="1">
    <location>
        <position position="482"/>
    </location>
    <ligand>
        <name>ATP</name>
        <dbReference type="ChEBI" id="CHEBI:30616"/>
    </ligand>
</feature>
<feature type="binding site" evidence="1">
    <location>
        <position position="489"/>
    </location>
    <ligand>
        <name>L-aspartate</name>
        <dbReference type="ChEBI" id="CHEBI:29991"/>
    </ligand>
</feature>
<feature type="binding site" evidence="1">
    <location>
        <begin position="534"/>
        <end position="537"/>
    </location>
    <ligand>
        <name>ATP</name>
        <dbReference type="ChEBI" id="CHEBI:30616"/>
    </ligand>
</feature>
<protein>
    <recommendedName>
        <fullName evidence="1">Aspartate--tRNA ligase</fullName>
        <ecNumber evidence="1">6.1.1.12</ecNumber>
    </recommendedName>
    <alternativeName>
        <fullName evidence="1">Aspartyl-tRNA synthetase</fullName>
        <shortName evidence="1">AspRS</shortName>
    </alternativeName>
</protein>
<organism>
    <name type="scientific">Lactobacillus acidophilus (strain ATCC 700396 / NCK56 / N2 / NCFM)</name>
    <dbReference type="NCBI Taxonomy" id="272621"/>
    <lineage>
        <taxon>Bacteria</taxon>
        <taxon>Bacillati</taxon>
        <taxon>Bacillota</taxon>
        <taxon>Bacilli</taxon>
        <taxon>Lactobacillales</taxon>
        <taxon>Lactobacillaceae</taxon>
        <taxon>Lactobacillus</taxon>
    </lineage>
</organism>
<comment type="function">
    <text evidence="1">Catalyzes the attachment of L-aspartate to tRNA(Asp) in a two-step reaction: L-aspartate is first activated by ATP to form Asp-AMP and then transferred to the acceptor end of tRNA(Asp).</text>
</comment>
<comment type="catalytic activity">
    <reaction evidence="1">
        <text>tRNA(Asp) + L-aspartate + ATP = L-aspartyl-tRNA(Asp) + AMP + diphosphate</text>
        <dbReference type="Rhea" id="RHEA:19649"/>
        <dbReference type="Rhea" id="RHEA-COMP:9660"/>
        <dbReference type="Rhea" id="RHEA-COMP:9678"/>
        <dbReference type="ChEBI" id="CHEBI:29991"/>
        <dbReference type="ChEBI" id="CHEBI:30616"/>
        <dbReference type="ChEBI" id="CHEBI:33019"/>
        <dbReference type="ChEBI" id="CHEBI:78442"/>
        <dbReference type="ChEBI" id="CHEBI:78516"/>
        <dbReference type="ChEBI" id="CHEBI:456215"/>
        <dbReference type="EC" id="6.1.1.12"/>
    </reaction>
</comment>
<comment type="subunit">
    <text evidence="1">Homodimer.</text>
</comment>
<comment type="subcellular location">
    <subcellularLocation>
        <location evidence="1">Cytoplasm</location>
    </subcellularLocation>
</comment>
<comment type="similarity">
    <text evidence="1">Belongs to the class-II aminoacyl-tRNA synthetase family. Type 1 subfamily.</text>
</comment>
<dbReference type="EC" id="6.1.1.12" evidence="1"/>
<dbReference type="EMBL" id="CP000033">
    <property type="protein sequence ID" value="AAV42790.1"/>
    <property type="molecule type" value="Genomic_DNA"/>
</dbReference>
<dbReference type="RefSeq" id="WP_003547039.1">
    <property type="nucleotide sequence ID" value="NC_006814.3"/>
</dbReference>
<dbReference type="RefSeq" id="YP_193821.1">
    <property type="nucleotide sequence ID" value="NC_006814.3"/>
</dbReference>
<dbReference type="SMR" id="Q5FKI4"/>
<dbReference type="STRING" id="272621.LBA0936"/>
<dbReference type="GeneID" id="93289947"/>
<dbReference type="KEGG" id="lac:LBA0936"/>
<dbReference type="PATRIC" id="fig|272621.13.peg.889"/>
<dbReference type="eggNOG" id="COG0173">
    <property type="taxonomic scope" value="Bacteria"/>
</dbReference>
<dbReference type="HOGENOM" id="CLU_014330_3_2_9"/>
<dbReference type="OrthoDB" id="9802326at2"/>
<dbReference type="BioCyc" id="LACI272621:G1G49-940-MONOMER"/>
<dbReference type="Proteomes" id="UP000006381">
    <property type="component" value="Chromosome"/>
</dbReference>
<dbReference type="GO" id="GO:0005737">
    <property type="term" value="C:cytoplasm"/>
    <property type="evidence" value="ECO:0007669"/>
    <property type="project" value="UniProtKB-SubCell"/>
</dbReference>
<dbReference type="GO" id="GO:0004815">
    <property type="term" value="F:aspartate-tRNA ligase activity"/>
    <property type="evidence" value="ECO:0007669"/>
    <property type="project" value="UniProtKB-UniRule"/>
</dbReference>
<dbReference type="GO" id="GO:0005524">
    <property type="term" value="F:ATP binding"/>
    <property type="evidence" value="ECO:0007669"/>
    <property type="project" value="UniProtKB-UniRule"/>
</dbReference>
<dbReference type="GO" id="GO:0140096">
    <property type="term" value="F:catalytic activity, acting on a protein"/>
    <property type="evidence" value="ECO:0007669"/>
    <property type="project" value="UniProtKB-ARBA"/>
</dbReference>
<dbReference type="GO" id="GO:0003676">
    <property type="term" value="F:nucleic acid binding"/>
    <property type="evidence" value="ECO:0007669"/>
    <property type="project" value="InterPro"/>
</dbReference>
<dbReference type="GO" id="GO:0016740">
    <property type="term" value="F:transferase activity"/>
    <property type="evidence" value="ECO:0007669"/>
    <property type="project" value="UniProtKB-ARBA"/>
</dbReference>
<dbReference type="GO" id="GO:0006422">
    <property type="term" value="P:aspartyl-tRNA aminoacylation"/>
    <property type="evidence" value="ECO:0007669"/>
    <property type="project" value="UniProtKB-UniRule"/>
</dbReference>
<dbReference type="CDD" id="cd00777">
    <property type="entry name" value="AspRS_core"/>
    <property type="match status" value="1"/>
</dbReference>
<dbReference type="CDD" id="cd04317">
    <property type="entry name" value="EcAspRS_like_N"/>
    <property type="match status" value="1"/>
</dbReference>
<dbReference type="Gene3D" id="3.30.930.10">
    <property type="entry name" value="Bira Bifunctional Protein, Domain 2"/>
    <property type="match status" value="1"/>
</dbReference>
<dbReference type="Gene3D" id="3.30.1360.30">
    <property type="entry name" value="GAD-like domain"/>
    <property type="match status" value="1"/>
</dbReference>
<dbReference type="Gene3D" id="2.40.50.140">
    <property type="entry name" value="Nucleic acid-binding proteins"/>
    <property type="match status" value="1"/>
</dbReference>
<dbReference type="HAMAP" id="MF_00044">
    <property type="entry name" value="Asp_tRNA_synth_type1"/>
    <property type="match status" value="1"/>
</dbReference>
<dbReference type="InterPro" id="IPR004364">
    <property type="entry name" value="Aa-tRNA-synt_II"/>
</dbReference>
<dbReference type="InterPro" id="IPR006195">
    <property type="entry name" value="aa-tRNA-synth_II"/>
</dbReference>
<dbReference type="InterPro" id="IPR045864">
    <property type="entry name" value="aa-tRNA-synth_II/BPL/LPL"/>
</dbReference>
<dbReference type="InterPro" id="IPR004524">
    <property type="entry name" value="Asp-tRNA-ligase_1"/>
</dbReference>
<dbReference type="InterPro" id="IPR047089">
    <property type="entry name" value="Asp-tRNA-ligase_1_N"/>
</dbReference>
<dbReference type="InterPro" id="IPR002312">
    <property type="entry name" value="Asp/Asn-tRNA-synth_IIb"/>
</dbReference>
<dbReference type="InterPro" id="IPR047090">
    <property type="entry name" value="AspRS_core"/>
</dbReference>
<dbReference type="InterPro" id="IPR004115">
    <property type="entry name" value="GAD-like_sf"/>
</dbReference>
<dbReference type="InterPro" id="IPR029351">
    <property type="entry name" value="GAD_dom"/>
</dbReference>
<dbReference type="InterPro" id="IPR012340">
    <property type="entry name" value="NA-bd_OB-fold"/>
</dbReference>
<dbReference type="InterPro" id="IPR004365">
    <property type="entry name" value="NA-bd_OB_tRNA"/>
</dbReference>
<dbReference type="NCBIfam" id="TIGR00459">
    <property type="entry name" value="aspS_bact"/>
    <property type="match status" value="1"/>
</dbReference>
<dbReference type="NCBIfam" id="NF001750">
    <property type="entry name" value="PRK00476.1"/>
    <property type="match status" value="1"/>
</dbReference>
<dbReference type="PANTHER" id="PTHR22594:SF5">
    <property type="entry name" value="ASPARTATE--TRNA LIGASE, MITOCHONDRIAL"/>
    <property type="match status" value="1"/>
</dbReference>
<dbReference type="PANTHER" id="PTHR22594">
    <property type="entry name" value="ASPARTYL/LYSYL-TRNA SYNTHETASE"/>
    <property type="match status" value="1"/>
</dbReference>
<dbReference type="Pfam" id="PF02938">
    <property type="entry name" value="GAD"/>
    <property type="match status" value="1"/>
</dbReference>
<dbReference type="Pfam" id="PF00152">
    <property type="entry name" value="tRNA-synt_2"/>
    <property type="match status" value="1"/>
</dbReference>
<dbReference type="Pfam" id="PF01336">
    <property type="entry name" value="tRNA_anti-codon"/>
    <property type="match status" value="1"/>
</dbReference>
<dbReference type="PRINTS" id="PR01042">
    <property type="entry name" value="TRNASYNTHASP"/>
</dbReference>
<dbReference type="SUPFAM" id="SSF55681">
    <property type="entry name" value="Class II aaRS and biotin synthetases"/>
    <property type="match status" value="1"/>
</dbReference>
<dbReference type="SUPFAM" id="SSF55261">
    <property type="entry name" value="GAD domain-like"/>
    <property type="match status" value="1"/>
</dbReference>
<dbReference type="SUPFAM" id="SSF50249">
    <property type="entry name" value="Nucleic acid-binding proteins"/>
    <property type="match status" value="1"/>
</dbReference>
<dbReference type="PROSITE" id="PS50862">
    <property type="entry name" value="AA_TRNA_LIGASE_II"/>
    <property type="match status" value="1"/>
</dbReference>
<evidence type="ECO:0000255" key="1">
    <source>
        <dbReference type="HAMAP-Rule" id="MF_00044"/>
    </source>
</evidence>
<accession>Q5FKI4</accession>
<reference key="1">
    <citation type="journal article" date="2005" name="Proc. Natl. Acad. Sci. U.S.A.">
        <title>Complete genome sequence of the probiotic lactic acid bacterium Lactobacillus acidophilus NCFM.</title>
        <authorList>
            <person name="Altermann E."/>
            <person name="Russell W.M."/>
            <person name="Azcarate-Peril M.A."/>
            <person name="Barrangou R."/>
            <person name="Buck B.L."/>
            <person name="McAuliffe O."/>
            <person name="Souther N."/>
            <person name="Dobson A."/>
            <person name="Duong T."/>
            <person name="Callanan M."/>
            <person name="Lick S."/>
            <person name="Hamrick A."/>
            <person name="Cano R."/>
            <person name="Klaenhammer T.R."/>
        </authorList>
    </citation>
    <scope>NUCLEOTIDE SEQUENCE [LARGE SCALE GENOMIC DNA]</scope>
    <source>
        <strain>ATCC 700396 / NCK56 / N2 / NCFM</strain>
    </source>
</reference>